<proteinExistence type="inferred from homology"/>
<accession>Q6FXJ3</accession>
<name>SYM1_CANGA</name>
<feature type="chain" id="PRO_0000234409" description="Protein SYM1">
    <location>
        <begin position="1"/>
        <end position="210"/>
    </location>
</feature>
<feature type="transmembrane region" description="Helical" evidence="2">
    <location>
        <begin position="22"/>
        <end position="39"/>
    </location>
</feature>
<feature type="transmembrane region" description="Helical" evidence="2">
    <location>
        <begin position="68"/>
        <end position="84"/>
    </location>
</feature>
<feature type="transmembrane region" description="Helical" evidence="2">
    <location>
        <begin position="112"/>
        <end position="129"/>
    </location>
</feature>
<feature type="transmembrane region" description="Helical" evidence="2">
    <location>
        <begin position="173"/>
        <end position="189"/>
    </location>
</feature>
<gene>
    <name type="primary">SYM1</name>
    <name type="ordered locus">CAGL0B03465g</name>
</gene>
<keyword id="KW-0472">Membrane</keyword>
<keyword id="KW-0496">Mitochondrion</keyword>
<keyword id="KW-0999">Mitochondrion inner membrane</keyword>
<keyword id="KW-1185">Reference proteome</keyword>
<keyword id="KW-0812">Transmembrane</keyword>
<keyword id="KW-1133">Transmembrane helix</keyword>
<protein>
    <recommendedName>
        <fullName>Protein SYM1</fullName>
    </recommendedName>
</protein>
<reference key="1">
    <citation type="journal article" date="2004" name="Nature">
        <title>Genome evolution in yeasts.</title>
        <authorList>
            <person name="Dujon B."/>
            <person name="Sherman D."/>
            <person name="Fischer G."/>
            <person name="Durrens P."/>
            <person name="Casaregola S."/>
            <person name="Lafontaine I."/>
            <person name="de Montigny J."/>
            <person name="Marck C."/>
            <person name="Neuveglise C."/>
            <person name="Talla E."/>
            <person name="Goffard N."/>
            <person name="Frangeul L."/>
            <person name="Aigle M."/>
            <person name="Anthouard V."/>
            <person name="Babour A."/>
            <person name="Barbe V."/>
            <person name="Barnay S."/>
            <person name="Blanchin S."/>
            <person name="Beckerich J.-M."/>
            <person name="Beyne E."/>
            <person name="Bleykasten C."/>
            <person name="Boisrame A."/>
            <person name="Boyer J."/>
            <person name="Cattolico L."/>
            <person name="Confanioleri F."/>
            <person name="de Daruvar A."/>
            <person name="Despons L."/>
            <person name="Fabre E."/>
            <person name="Fairhead C."/>
            <person name="Ferry-Dumazet H."/>
            <person name="Groppi A."/>
            <person name="Hantraye F."/>
            <person name="Hennequin C."/>
            <person name="Jauniaux N."/>
            <person name="Joyet P."/>
            <person name="Kachouri R."/>
            <person name="Kerrest A."/>
            <person name="Koszul R."/>
            <person name="Lemaire M."/>
            <person name="Lesur I."/>
            <person name="Ma L."/>
            <person name="Muller H."/>
            <person name="Nicaud J.-M."/>
            <person name="Nikolski M."/>
            <person name="Oztas S."/>
            <person name="Ozier-Kalogeropoulos O."/>
            <person name="Pellenz S."/>
            <person name="Potier S."/>
            <person name="Richard G.-F."/>
            <person name="Straub M.-L."/>
            <person name="Suleau A."/>
            <person name="Swennen D."/>
            <person name="Tekaia F."/>
            <person name="Wesolowski-Louvel M."/>
            <person name="Westhof E."/>
            <person name="Wirth B."/>
            <person name="Zeniou-Meyer M."/>
            <person name="Zivanovic Y."/>
            <person name="Bolotin-Fukuhara M."/>
            <person name="Thierry A."/>
            <person name="Bouchier C."/>
            <person name="Caudron B."/>
            <person name="Scarpelli C."/>
            <person name="Gaillardin C."/>
            <person name="Weissenbach J."/>
            <person name="Wincker P."/>
            <person name="Souciet J.-L."/>
        </authorList>
    </citation>
    <scope>NUCLEOTIDE SEQUENCE [LARGE SCALE GENOMIC DNA]</scope>
    <source>
        <strain>ATCC 2001 / BCRC 20586 / JCM 3761 / NBRC 0622 / NRRL Y-65 / CBS 138</strain>
    </source>
</reference>
<organism>
    <name type="scientific">Candida glabrata (strain ATCC 2001 / BCRC 20586 / JCM 3761 / NBRC 0622 / NRRL Y-65 / CBS 138)</name>
    <name type="common">Yeast</name>
    <name type="synonym">Nakaseomyces glabratus</name>
    <dbReference type="NCBI Taxonomy" id="284593"/>
    <lineage>
        <taxon>Eukaryota</taxon>
        <taxon>Fungi</taxon>
        <taxon>Dikarya</taxon>
        <taxon>Ascomycota</taxon>
        <taxon>Saccharomycotina</taxon>
        <taxon>Saccharomycetes</taxon>
        <taxon>Saccharomycetales</taxon>
        <taxon>Saccharomycetaceae</taxon>
        <taxon>Nakaseomyces</taxon>
    </lineage>
</organism>
<dbReference type="EMBL" id="CR380948">
    <property type="protein sequence ID" value="CAG58022.1"/>
    <property type="molecule type" value="Genomic_DNA"/>
</dbReference>
<dbReference type="RefSeq" id="XP_445122.1">
    <property type="nucleotide sequence ID" value="XM_445122.1"/>
</dbReference>
<dbReference type="FunCoup" id="Q6FXJ3">
    <property type="interactions" value="621"/>
</dbReference>
<dbReference type="STRING" id="284593.Q6FXJ3"/>
<dbReference type="EnsemblFungi" id="CAGL0B03465g-T">
    <property type="protein sequence ID" value="CAGL0B03465g-T-p1"/>
    <property type="gene ID" value="CAGL0B03465g"/>
</dbReference>
<dbReference type="KEGG" id="cgr:2886647"/>
<dbReference type="CGD" id="CAL0127080">
    <property type="gene designation" value="CAGL0B03465g"/>
</dbReference>
<dbReference type="VEuPathDB" id="FungiDB:CAGL0B03465g"/>
<dbReference type="eggNOG" id="KOG1944">
    <property type="taxonomic scope" value="Eukaryota"/>
</dbReference>
<dbReference type="HOGENOM" id="CLU_049109_8_1_1"/>
<dbReference type="InParanoid" id="Q6FXJ3"/>
<dbReference type="OMA" id="CAPTMIG"/>
<dbReference type="Proteomes" id="UP000002428">
    <property type="component" value="Chromosome B"/>
</dbReference>
<dbReference type="GO" id="GO:0005743">
    <property type="term" value="C:mitochondrial inner membrane"/>
    <property type="evidence" value="ECO:0007669"/>
    <property type="project" value="UniProtKB-SubCell"/>
</dbReference>
<dbReference type="GO" id="GO:0006067">
    <property type="term" value="P:ethanol metabolic process"/>
    <property type="evidence" value="ECO:0007669"/>
    <property type="project" value="EnsemblFungi"/>
</dbReference>
<dbReference type="InterPro" id="IPR007248">
    <property type="entry name" value="Mpv17_PMP22"/>
</dbReference>
<dbReference type="PANTHER" id="PTHR11266">
    <property type="entry name" value="PEROXISOMAL MEMBRANE PROTEIN 2, PXMP2 MPV17"/>
    <property type="match status" value="1"/>
</dbReference>
<dbReference type="PANTHER" id="PTHR11266:SF17">
    <property type="entry name" value="PROTEIN MPV17"/>
    <property type="match status" value="1"/>
</dbReference>
<dbReference type="Pfam" id="PF04117">
    <property type="entry name" value="Mpv17_PMP22"/>
    <property type="match status" value="1"/>
</dbReference>
<sequence>MIRLFQLYEHQLKVRPKLTNSIMTGALFGIGDVSAQLLFPSGPDTLPPSAQTNDVKRGKYDIPRTVRAVVYGSMIFSFIGDRWYRFLTKVKFSNKPAKHWSNMVLRVCVDQLGFAPLGLPFYFGCMSLLEGHGLGAAREKIKLQWWDTLKTNWCVWPLFQMVNFSLVPLQHRLLAANVVAIFWNTFLSYTNSQIPVGGHKLTVQYPPTVQ</sequence>
<evidence type="ECO:0000250" key="1"/>
<evidence type="ECO:0000255" key="2"/>
<evidence type="ECO:0000305" key="3"/>
<comment type="function">
    <text evidence="1">May be involved in cellular response to stress. Required to maintain mitochondrial DNA (mtDNA) integrity and stability (By similarity).</text>
</comment>
<comment type="subcellular location">
    <subcellularLocation>
        <location evidence="1">Mitochondrion inner membrane</location>
        <topology evidence="1">Multi-pass membrane protein</topology>
    </subcellularLocation>
</comment>
<comment type="similarity">
    <text evidence="3">Belongs to the peroxisomal membrane protein PXMP2/4 family.</text>
</comment>